<name>YCIB_RALPJ</name>
<accession>B2UC26</accession>
<gene>
    <name evidence="1" type="primary">yciB</name>
    <name type="ordered locus">Rpic_1458</name>
</gene>
<comment type="function">
    <text evidence="1">Plays a role in cell envelope biogenesis, maintenance of cell envelope integrity and membrane homeostasis.</text>
</comment>
<comment type="subcellular location">
    <subcellularLocation>
        <location evidence="1">Cell inner membrane</location>
        <topology evidence="1">Multi-pass membrane protein</topology>
    </subcellularLocation>
</comment>
<comment type="similarity">
    <text evidence="1">Belongs to the YciB family.</text>
</comment>
<reference key="1">
    <citation type="submission" date="2008-05" db="EMBL/GenBank/DDBJ databases">
        <title>Complete sequence of chromosome 1 of Ralstonia pickettii 12J.</title>
        <authorList>
            <person name="Lucas S."/>
            <person name="Copeland A."/>
            <person name="Lapidus A."/>
            <person name="Glavina del Rio T."/>
            <person name="Dalin E."/>
            <person name="Tice H."/>
            <person name="Bruce D."/>
            <person name="Goodwin L."/>
            <person name="Pitluck S."/>
            <person name="Meincke L."/>
            <person name="Brettin T."/>
            <person name="Detter J.C."/>
            <person name="Han C."/>
            <person name="Kuske C.R."/>
            <person name="Schmutz J."/>
            <person name="Larimer F."/>
            <person name="Land M."/>
            <person name="Hauser L."/>
            <person name="Kyrpides N."/>
            <person name="Mikhailova N."/>
            <person name="Marsh T."/>
            <person name="Richardson P."/>
        </authorList>
    </citation>
    <scope>NUCLEOTIDE SEQUENCE [LARGE SCALE GENOMIC DNA]</scope>
    <source>
        <strain>12J</strain>
    </source>
</reference>
<protein>
    <recommendedName>
        <fullName evidence="1">Inner membrane-spanning protein YciB</fullName>
    </recommendedName>
</protein>
<evidence type="ECO:0000255" key="1">
    <source>
        <dbReference type="HAMAP-Rule" id="MF_00189"/>
    </source>
</evidence>
<proteinExistence type="inferred from homology"/>
<feature type="chain" id="PRO_1000098889" description="Inner membrane-spanning protein YciB">
    <location>
        <begin position="1"/>
        <end position="190"/>
    </location>
</feature>
<feature type="transmembrane region" description="Helical" evidence="1">
    <location>
        <begin position="3"/>
        <end position="23"/>
    </location>
</feature>
<feature type="transmembrane region" description="Helical" evidence="1">
    <location>
        <begin position="24"/>
        <end position="44"/>
    </location>
</feature>
<feature type="transmembrane region" description="Helical" evidence="1">
    <location>
        <begin position="49"/>
        <end position="69"/>
    </location>
</feature>
<feature type="transmembrane region" description="Helical" evidence="1">
    <location>
        <begin position="76"/>
        <end position="96"/>
    </location>
</feature>
<feature type="transmembrane region" description="Helical" evidence="1">
    <location>
        <begin position="121"/>
        <end position="141"/>
    </location>
</feature>
<feature type="transmembrane region" description="Helical" evidence="1">
    <location>
        <begin position="149"/>
        <end position="169"/>
    </location>
</feature>
<keyword id="KW-0997">Cell inner membrane</keyword>
<keyword id="KW-1003">Cell membrane</keyword>
<keyword id="KW-0472">Membrane</keyword>
<keyword id="KW-0812">Transmembrane</keyword>
<keyword id="KW-1133">Transmembrane helix</keyword>
<dbReference type="EMBL" id="CP001068">
    <property type="protein sequence ID" value="ACD26599.1"/>
    <property type="molecule type" value="Genomic_DNA"/>
</dbReference>
<dbReference type="STRING" id="402626.Rpic_1458"/>
<dbReference type="KEGG" id="rpi:Rpic_1458"/>
<dbReference type="eggNOG" id="COG2917">
    <property type="taxonomic scope" value="Bacteria"/>
</dbReference>
<dbReference type="HOGENOM" id="CLU_089554_2_0_4"/>
<dbReference type="GO" id="GO:0005886">
    <property type="term" value="C:plasma membrane"/>
    <property type="evidence" value="ECO:0007669"/>
    <property type="project" value="UniProtKB-SubCell"/>
</dbReference>
<dbReference type="HAMAP" id="MF_00189">
    <property type="entry name" value="YciB"/>
    <property type="match status" value="1"/>
</dbReference>
<dbReference type="InterPro" id="IPR006008">
    <property type="entry name" value="YciB"/>
</dbReference>
<dbReference type="NCBIfam" id="TIGR00997">
    <property type="entry name" value="ispZ"/>
    <property type="match status" value="1"/>
</dbReference>
<dbReference type="NCBIfam" id="NF001325">
    <property type="entry name" value="PRK00259.1-3"/>
    <property type="match status" value="1"/>
</dbReference>
<dbReference type="PANTHER" id="PTHR36917:SF1">
    <property type="entry name" value="INNER MEMBRANE-SPANNING PROTEIN YCIB"/>
    <property type="match status" value="1"/>
</dbReference>
<dbReference type="PANTHER" id="PTHR36917">
    <property type="entry name" value="INTRACELLULAR SEPTATION PROTEIN A-RELATED"/>
    <property type="match status" value="1"/>
</dbReference>
<dbReference type="Pfam" id="PF04279">
    <property type="entry name" value="IspA"/>
    <property type="match status" value="1"/>
</dbReference>
<organism>
    <name type="scientific">Ralstonia pickettii (strain 12J)</name>
    <dbReference type="NCBI Taxonomy" id="402626"/>
    <lineage>
        <taxon>Bacteria</taxon>
        <taxon>Pseudomonadati</taxon>
        <taxon>Pseudomonadota</taxon>
        <taxon>Betaproteobacteria</taxon>
        <taxon>Burkholderiales</taxon>
        <taxon>Burkholderiaceae</taxon>
        <taxon>Ralstonia</taxon>
    </lineage>
</organism>
<sequence length="190" mass="21777">MKFLFDLFPVILFFAAFKVAGIYVATTVAMVATVLQIAWVWFKHRKVDAMQWLSLLIIGVFGGATLIFHNETFIKWKPTVLYWLFGVVLLGSVVVVRKNLIRAMMEQQVSLPETMWGRLNLVWALFFLVMGCLNLYVAYNFDTDVWVNFKLFGSMGLMVVFILAQSVWLARHMQERPANAANDANIGDDR</sequence>